<feature type="chain" id="PRO_1000215319" description="tRNA N6-adenosine threonylcarbamoyltransferase">
    <location>
        <begin position="1"/>
        <end position="325"/>
    </location>
</feature>
<feature type="binding site" evidence="1">
    <location>
        <position position="107"/>
    </location>
    <ligand>
        <name>Fe cation</name>
        <dbReference type="ChEBI" id="CHEBI:24875"/>
    </ligand>
</feature>
<feature type="binding site" evidence="1">
    <location>
        <position position="111"/>
    </location>
    <ligand>
        <name>Fe cation</name>
        <dbReference type="ChEBI" id="CHEBI:24875"/>
    </ligand>
</feature>
<feature type="binding site" evidence="1">
    <location>
        <begin position="127"/>
        <end position="131"/>
    </location>
    <ligand>
        <name>substrate</name>
    </ligand>
</feature>
<feature type="binding site" evidence="1">
    <location>
        <position position="127"/>
    </location>
    <ligand>
        <name>Fe cation</name>
        <dbReference type="ChEBI" id="CHEBI:24875"/>
    </ligand>
</feature>
<feature type="binding site" evidence="1">
    <location>
        <position position="159"/>
    </location>
    <ligand>
        <name>substrate</name>
    </ligand>
</feature>
<feature type="binding site" evidence="1">
    <location>
        <position position="172"/>
    </location>
    <ligand>
        <name>substrate</name>
    </ligand>
</feature>
<feature type="binding site" evidence="1">
    <location>
        <position position="176"/>
    </location>
    <ligand>
        <name>substrate</name>
    </ligand>
</feature>
<feature type="binding site" evidence="1">
    <location>
        <position position="257"/>
    </location>
    <ligand>
        <name>substrate</name>
    </ligand>
</feature>
<feature type="binding site" evidence="1">
    <location>
        <position position="285"/>
    </location>
    <ligand>
        <name>Fe cation</name>
        <dbReference type="ChEBI" id="CHEBI:24875"/>
    </ligand>
</feature>
<accession>C5A3G1</accession>
<keyword id="KW-0012">Acyltransferase</keyword>
<keyword id="KW-0963">Cytoplasm</keyword>
<keyword id="KW-0408">Iron</keyword>
<keyword id="KW-0479">Metal-binding</keyword>
<keyword id="KW-1185">Reference proteome</keyword>
<keyword id="KW-0808">Transferase</keyword>
<keyword id="KW-0819">tRNA processing</keyword>
<evidence type="ECO:0000255" key="1">
    <source>
        <dbReference type="HAMAP-Rule" id="MF_01446"/>
    </source>
</evidence>
<reference key="1">
    <citation type="journal article" date="2007" name="Genome Biol.">
        <title>Genome analysis and genome-wide proteomics of Thermococcus gammatolerans, the most radioresistant organism known amongst the Archaea.</title>
        <authorList>
            <person name="Zivanovic Y."/>
            <person name="Armengaud J."/>
            <person name="Lagorce A."/>
            <person name="Leplat C."/>
            <person name="Guerin P."/>
            <person name="Dutertre M."/>
            <person name="Anthouard V."/>
            <person name="Forterre P."/>
            <person name="Wincker P."/>
            <person name="Confalonieri F."/>
        </authorList>
    </citation>
    <scope>NUCLEOTIDE SEQUENCE [LARGE SCALE GENOMIC DNA]</scope>
    <source>
        <strain>DSM 15229 / JCM 11827 / EJ3</strain>
    </source>
</reference>
<comment type="function">
    <text evidence="1">Required for the formation of a threonylcarbamoyl group on adenosine at position 37 (t(6)A37) in tRNAs that read codons beginning with adenine. Is a component of the KEOPS complex that is probably involved in the transfer of the threonylcarbamoyl moiety of threonylcarbamoyl-AMP (TC-AMP) to the N6 group of A37. Kae1 likely plays a direct catalytic role in this reaction, but requires other protein(s) of the complex to fulfill this activity.</text>
</comment>
<comment type="catalytic activity">
    <reaction evidence="1">
        <text>L-threonylcarbamoyladenylate + adenosine(37) in tRNA = N(6)-L-threonylcarbamoyladenosine(37) in tRNA + AMP + H(+)</text>
        <dbReference type="Rhea" id="RHEA:37059"/>
        <dbReference type="Rhea" id="RHEA-COMP:10162"/>
        <dbReference type="Rhea" id="RHEA-COMP:10163"/>
        <dbReference type="ChEBI" id="CHEBI:15378"/>
        <dbReference type="ChEBI" id="CHEBI:73682"/>
        <dbReference type="ChEBI" id="CHEBI:74411"/>
        <dbReference type="ChEBI" id="CHEBI:74418"/>
        <dbReference type="ChEBI" id="CHEBI:456215"/>
        <dbReference type="EC" id="2.3.1.234"/>
    </reaction>
</comment>
<comment type="cofactor">
    <cofactor evidence="1">
        <name>Fe(2+)</name>
        <dbReference type="ChEBI" id="CHEBI:29033"/>
    </cofactor>
    <text evidence="1">Binds 1 Fe(2+) ion per subunit.</text>
</comment>
<comment type="subunit">
    <text evidence="1">Monomer. Component of the KEOPS complex that consists of Kae1, Bud32, Cgi121 and Pcc1; the whole complex dimerizes.</text>
</comment>
<comment type="subcellular location">
    <subcellularLocation>
        <location evidence="1">Cytoplasm</location>
    </subcellularLocation>
</comment>
<comment type="similarity">
    <text evidence="1">Belongs to the KAE1 / TsaD family.</text>
</comment>
<dbReference type="EC" id="2.3.1.234" evidence="1"/>
<dbReference type="EMBL" id="CP001398">
    <property type="protein sequence ID" value="ACS32773.1"/>
    <property type="molecule type" value="Genomic_DNA"/>
</dbReference>
<dbReference type="RefSeq" id="WP_015857892.1">
    <property type="nucleotide sequence ID" value="NC_012804.1"/>
</dbReference>
<dbReference type="SMR" id="C5A3G1"/>
<dbReference type="STRING" id="593117.TGAM_0271"/>
<dbReference type="PaxDb" id="593117-TGAM_0271"/>
<dbReference type="GeneID" id="7988846"/>
<dbReference type="KEGG" id="tga:TGAM_0271"/>
<dbReference type="PATRIC" id="fig|593117.10.peg.274"/>
<dbReference type="eggNOG" id="arCOG01183">
    <property type="taxonomic scope" value="Archaea"/>
</dbReference>
<dbReference type="HOGENOM" id="CLU_023208_2_2_2"/>
<dbReference type="OrthoDB" id="6818at2157"/>
<dbReference type="Proteomes" id="UP000001488">
    <property type="component" value="Chromosome"/>
</dbReference>
<dbReference type="GO" id="GO:0005737">
    <property type="term" value="C:cytoplasm"/>
    <property type="evidence" value="ECO:0007669"/>
    <property type="project" value="UniProtKB-SubCell"/>
</dbReference>
<dbReference type="GO" id="GO:0000408">
    <property type="term" value="C:EKC/KEOPS complex"/>
    <property type="evidence" value="ECO:0007669"/>
    <property type="project" value="InterPro"/>
</dbReference>
<dbReference type="GO" id="GO:0005506">
    <property type="term" value="F:iron ion binding"/>
    <property type="evidence" value="ECO:0007669"/>
    <property type="project" value="UniProtKB-UniRule"/>
</dbReference>
<dbReference type="GO" id="GO:0061711">
    <property type="term" value="F:N(6)-L-threonylcarbamoyladenine synthase activity"/>
    <property type="evidence" value="ECO:0007669"/>
    <property type="project" value="UniProtKB-EC"/>
</dbReference>
<dbReference type="GO" id="GO:0002949">
    <property type="term" value="P:tRNA threonylcarbamoyladenosine modification"/>
    <property type="evidence" value="ECO:0007669"/>
    <property type="project" value="UniProtKB-UniRule"/>
</dbReference>
<dbReference type="CDD" id="cd24131">
    <property type="entry name" value="ASKHA_NBD_Kae1_arch_bac"/>
    <property type="match status" value="1"/>
</dbReference>
<dbReference type="FunFam" id="3.30.420.40:FF:000038">
    <property type="entry name" value="Probable tRNA N6-adenosine threonylcarbamoyltransferase"/>
    <property type="match status" value="1"/>
</dbReference>
<dbReference type="Gene3D" id="3.30.420.40">
    <property type="match status" value="2"/>
</dbReference>
<dbReference type="HAMAP" id="MF_01446">
    <property type="entry name" value="Kae1"/>
    <property type="match status" value="1"/>
</dbReference>
<dbReference type="InterPro" id="IPR043129">
    <property type="entry name" value="ATPase_NBD"/>
</dbReference>
<dbReference type="InterPro" id="IPR000905">
    <property type="entry name" value="Gcp-like_dom"/>
</dbReference>
<dbReference type="InterPro" id="IPR017861">
    <property type="entry name" value="KAE1/TsaD"/>
</dbReference>
<dbReference type="InterPro" id="IPR034680">
    <property type="entry name" value="Kae1_archaea_euk"/>
</dbReference>
<dbReference type="InterPro" id="IPR017860">
    <property type="entry name" value="Peptidase_M22_CS"/>
</dbReference>
<dbReference type="NCBIfam" id="TIGR03722">
    <property type="entry name" value="arch_KAE1"/>
    <property type="match status" value="1"/>
</dbReference>
<dbReference type="NCBIfam" id="TIGR00329">
    <property type="entry name" value="gcp_kae1"/>
    <property type="match status" value="1"/>
</dbReference>
<dbReference type="NCBIfam" id="NF007174">
    <property type="entry name" value="PRK09605.1"/>
    <property type="match status" value="1"/>
</dbReference>
<dbReference type="PANTHER" id="PTHR11735">
    <property type="entry name" value="TRNA N6-ADENOSINE THREONYLCARBAMOYLTRANSFERASE"/>
    <property type="match status" value="1"/>
</dbReference>
<dbReference type="PANTHER" id="PTHR11735:SF14">
    <property type="entry name" value="TRNA N6-ADENOSINE THREONYLCARBAMOYLTRANSFERASE"/>
    <property type="match status" value="1"/>
</dbReference>
<dbReference type="Pfam" id="PF00814">
    <property type="entry name" value="TsaD"/>
    <property type="match status" value="1"/>
</dbReference>
<dbReference type="PRINTS" id="PR00789">
    <property type="entry name" value="OSIALOPTASE"/>
</dbReference>
<dbReference type="SUPFAM" id="SSF53067">
    <property type="entry name" value="Actin-like ATPase domain"/>
    <property type="match status" value="1"/>
</dbReference>
<dbReference type="PROSITE" id="PS01016">
    <property type="entry name" value="GLYCOPROTEASE"/>
    <property type="match status" value="1"/>
</dbReference>
<protein>
    <recommendedName>
        <fullName evidence="1">tRNA N6-adenosine threonylcarbamoyltransferase</fullName>
        <ecNumber evidence="1">2.3.1.234</ecNumber>
    </recommendedName>
    <alternativeName>
        <fullName evidence="1">N6-L-threonylcarbamoyladenine synthase</fullName>
        <shortName evidence="1">t(6)A synthase</shortName>
    </alternativeName>
    <alternativeName>
        <fullName evidence="1">t(6)A37 threonylcarbamoyladenosine biosynthesis protein Kae1</fullName>
    </alternativeName>
    <alternativeName>
        <fullName evidence="1">tRNA threonylcarbamoyladenosine biosynthesis protein Kae1</fullName>
    </alternativeName>
</protein>
<name>KAE1_THEGJ</name>
<sequence length="325" mass="35249">MIALGIEGTAHTLGIGIVTEKKVLANVFDTLTTEKGGIHPKEAAEHHARLLKPLLRKALQTAGITMEDVDVIAFSQGPGLGPALRVVATAARALAIKYNKPIVGVNHCIAHVEITKMFGVKDPVGLYVSGGNTQVLALEGGRYRVFGETLDIGIGNAIDTFARELGIGFPGGPKIEKLALKGERYIELPSAVKGMDLSFSGLLTEAVRKYRTGRYRVEDLAYSFQETAFSALVEVTERAVAHTGKNEVVLVGGVAANNRLREMLKIMAEDRGVEFFVPPYDLCRDNGAMIAYTGLRMYLGGVRFKISDTVVKQKFRTDEVDVTWS</sequence>
<organism>
    <name type="scientific">Thermococcus gammatolerans (strain DSM 15229 / JCM 11827 / EJ3)</name>
    <dbReference type="NCBI Taxonomy" id="593117"/>
    <lineage>
        <taxon>Archaea</taxon>
        <taxon>Methanobacteriati</taxon>
        <taxon>Methanobacteriota</taxon>
        <taxon>Thermococci</taxon>
        <taxon>Thermococcales</taxon>
        <taxon>Thermococcaceae</taxon>
        <taxon>Thermococcus</taxon>
    </lineage>
</organism>
<gene>
    <name evidence="1" type="primary">kae1</name>
    <name type="ordered locus">TGAM_0271</name>
</gene>
<proteinExistence type="inferred from homology"/>